<name>HOP2_SCHPO</name>
<evidence type="ECO:0000269" key="1">
    <source>
    </source>
</evidence>
<evidence type="ECO:0000269" key="2">
    <source>
    </source>
</evidence>
<evidence type="ECO:0000305" key="3"/>
<reference key="1">
    <citation type="journal article" date="2001" name="EMBO J.">
        <title>A novel meiosis-specific protein of fission yeast, Meu13p, promotes homologous pairing independently of homologous recombination.</title>
        <authorList>
            <person name="Nabeshima K."/>
            <person name="Kakihara Y."/>
            <person name="Hiraoka Y."/>
            <person name="Nojima H."/>
        </authorList>
    </citation>
    <scope>NUCLEOTIDE SEQUENCE [GENOMIC DNA]</scope>
    <scope>FUNCTION</scope>
    <scope>SUBCELLULAR LOCATION</scope>
</reference>
<reference key="2">
    <citation type="journal article" date="2002" name="Nature">
        <title>The genome sequence of Schizosaccharomyces pombe.</title>
        <authorList>
            <person name="Wood V."/>
            <person name="Gwilliam R."/>
            <person name="Rajandream M.A."/>
            <person name="Lyne M.H."/>
            <person name="Lyne R."/>
            <person name="Stewart A."/>
            <person name="Sgouros J.G."/>
            <person name="Peat N."/>
            <person name="Hayles J."/>
            <person name="Baker S.G."/>
            <person name="Basham D."/>
            <person name="Bowman S."/>
            <person name="Brooks K."/>
            <person name="Brown D."/>
            <person name="Brown S."/>
            <person name="Chillingworth T."/>
            <person name="Churcher C.M."/>
            <person name="Collins M."/>
            <person name="Connor R."/>
            <person name="Cronin A."/>
            <person name="Davis P."/>
            <person name="Feltwell T."/>
            <person name="Fraser A."/>
            <person name="Gentles S."/>
            <person name="Goble A."/>
            <person name="Hamlin N."/>
            <person name="Harris D.E."/>
            <person name="Hidalgo J."/>
            <person name="Hodgson G."/>
            <person name="Holroyd S."/>
            <person name="Hornsby T."/>
            <person name="Howarth S."/>
            <person name="Huckle E.J."/>
            <person name="Hunt S."/>
            <person name="Jagels K."/>
            <person name="James K.D."/>
            <person name="Jones L."/>
            <person name="Jones M."/>
            <person name="Leather S."/>
            <person name="McDonald S."/>
            <person name="McLean J."/>
            <person name="Mooney P."/>
            <person name="Moule S."/>
            <person name="Mungall K.L."/>
            <person name="Murphy L.D."/>
            <person name="Niblett D."/>
            <person name="Odell C."/>
            <person name="Oliver K."/>
            <person name="O'Neil S."/>
            <person name="Pearson D."/>
            <person name="Quail M.A."/>
            <person name="Rabbinowitsch E."/>
            <person name="Rutherford K.M."/>
            <person name="Rutter S."/>
            <person name="Saunders D."/>
            <person name="Seeger K."/>
            <person name="Sharp S."/>
            <person name="Skelton J."/>
            <person name="Simmonds M.N."/>
            <person name="Squares R."/>
            <person name="Squares S."/>
            <person name="Stevens K."/>
            <person name="Taylor K."/>
            <person name="Taylor R.G."/>
            <person name="Tivey A."/>
            <person name="Walsh S.V."/>
            <person name="Warren T."/>
            <person name="Whitehead S."/>
            <person name="Woodward J.R."/>
            <person name="Volckaert G."/>
            <person name="Aert R."/>
            <person name="Robben J."/>
            <person name="Grymonprez B."/>
            <person name="Weltjens I."/>
            <person name="Vanstreels E."/>
            <person name="Rieger M."/>
            <person name="Schaefer M."/>
            <person name="Mueller-Auer S."/>
            <person name="Gabel C."/>
            <person name="Fuchs M."/>
            <person name="Duesterhoeft A."/>
            <person name="Fritzc C."/>
            <person name="Holzer E."/>
            <person name="Moestl D."/>
            <person name="Hilbert H."/>
            <person name="Borzym K."/>
            <person name="Langer I."/>
            <person name="Beck A."/>
            <person name="Lehrach H."/>
            <person name="Reinhardt R."/>
            <person name="Pohl T.M."/>
            <person name="Eger P."/>
            <person name="Zimmermann W."/>
            <person name="Wedler H."/>
            <person name="Wambutt R."/>
            <person name="Purnelle B."/>
            <person name="Goffeau A."/>
            <person name="Cadieu E."/>
            <person name="Dreano S."/>
            <person name="Gloux S."/>
            <person name="Lelaure V."/>
            <person name="Mottier S."/>
            <person name="Galibert F."/>
            <person name="Aves S.J."/>
            <person name="Xiang Z."/>
            <person name="Hunt C."/>
            <person name="Moore K."/>
            <person name="Hurst S.M."/>
            <person name="Lucas M."/>
            <person name="Rochet M."/>
            <person name="Gaillardin C."/>
            <person name="Tallada V.A."/>
            <person name="Garzon A."/>
            <person name="Thode G."/>
            <person name="Daga R.R."/>
            <person name="Cruzado L."/>
            <person name="Jimenez J."/>
            <person name="Sanchez M."/>
            <person name="del Rey F."/>
            <person name="Benito J."/>
            <person name="Dominguez A."/>
            <person name="Revuelta J.L."/>
            <person name="Moreno S."/>
            <person name="Armstrong J."/>
            <person name="Forsburg S.L."/>
            <person name="Cerutti L."/>
            <person name="Lowe T."/>
            <person name="McCombie W.R."/>
            <person name="Paulsen I."/>
            <person name="Potashkin J."/>
            <person name="Shpakovski G.V."/>
            <person name="Ussery D."/>
            <person name="Barrell B.G."/>
            <person name="Nurse P."/>
        </authorList>
    </citation>
    <scope>NUCLEOTIDE SEQUENCE [LARGE SCALE GENOMIC DNA]</scope>
    <source>
        <strain>972 / ATCC 24843</strain>
    </source>
</reference>
<reference key="3">
    <citation type="journal article" date="2004" name="Nucleic Acids Res.">
        <title>Mcp7, a meiosis-specific coiled-coil protein of fission yeast, associates with Meu13 and is required for meiotic recombination.</title>
        <authorList>
            <person name="Saito T.T."/>
            <person name="Tougan T."/>
            <person name="Kasama T."/>
            <person name="Okuzaki D."/>
            <person name="Nojima H."/>
        </authorList>
    </citation>
    <scope>INTERACTION WITH MCP7</scope>
</reference>
<sequence>MAKAKEVKAKPIKGEEAEKLVYEYLRKTNRPYSATDVSANLKNVVSKQVAQKALEQLRDTGLIHGKLYGKQSVFVCLQDDLAAATPEELAEMEKQIQELKDEVSVVKTLYKEKCIELQALNNSLSPAEIREKIQSIDKEIEETSSKLESLRNGTVKQISKEAMQKTDKNYDFAKKGFSNRKKMFYDLWHLITDSLENPKQLWEKLGFETEGPIDLN</sequence>
<organism>
    <name type="scientific">Schizosaccharomyces pombe (strain 972 / ATCC 24843)</name>
    <name type="common">Fission yeast</name>
    <dbReference type="NCBI Taxonomy" id="284812"/>
    <lineage>
        <taxon>Eukaryota</taxon>
        <taxon>Fungi</taxon>
        <taxon>Dikarya</taxon>
        <taxon>Ascomycota</taxon>
        <taxon>Taphrinomycotina</taxon>
        <taxon>Schizosaccharomycetes</taxon>
        <taxon>Schizosaccharomycetales</taxon>
        <taxon>Schizosaccharomycetaceae</taxon>
        <taxon>Schizosaccharomyces</taxon>
    </lineage>
</organism>
<dbReference type="EMBL" id="AB017038">
    <property type="protein sequence ID" value="BAB17055.1"/>
    <property type="molecule type" value="Genomic_DNA"/>
</dbReference>
<dbReference type="EMBL" id="CU329670">
    <property type="protein sequence ID" value="CAD33796.1"/>
    <property type="molecule type" value="Genomic_DNA"/>
</dbReference>
<dbReference type="RefSeq" id="NP_001018191.1">
    <property type="nucleotide sequence ID" value="NM_001018551.1"/>
</dbReference>
<dbReference type="SMR" id="Q9HGK2"/>
<dbReference type="BioGRID" id="280609">
    <property type="interactions" value="24"/>
</dbReference>
<dbReference type="FunCoup" id="Q9HGK2">
    <property type="interactions" value="241"/>
</dbReference>
<dbReference type="STRING" id="284812.Q9HGK2"/>
<dbReference type="PaxDb" id="4896-SPAC222.15.1"/>
<dbReference type="EnsemblFungi" id="SPAC222.15.1">
    <property type="protein sequence ID" value="SPAC222.15.1:pep"/>
    <property type="gene ID" value="SPAC222.15"/>
</dbReference>
<dbReference type="GeneID" id="3361533"/>
<dbReference type="KEGG" id="spo:3361533"/>
<dbReference type="PomBase" id="SPAC222.15">
    <property type="gene designation" value="meu13"/>
</dbReference>
<dbReference type="VEuPathDB" id="FungiDB:SPAC222.15"/>
<dbReference type="eggNOG" id="KOG4603">
    <property type="taxonomic scope" value="Eukaryota"/>
</dbReference>
<dbReference type="HOGENOM" id="CLU_063266_3_0_1"/>
<dbReference type="InParanoid" id="Q9HGK2"/>
<dbReference type="OMA" id="WLKCTEV"/>
<dbReference type="PhylomeDB" id="Q9HGK2"/>
<dbReference type="PRO" id="PR:Q9HGK2"/>
<dbReference type="Proteomes" id="UP000002485">
    <property type="component" value="Chromosome I"/>
</dbReference>
<dbReference type="GO" id="GO:0000785">
    <property type="term" value="C:chromatin"/>
    <property type="evidence" value="ECO:0000314"/>
    <property type="project" value="PomBase"/>
</dbReference>
<dbReference type="GO" id="GO:0000794">
    <property type="term" value="C:condensed nuclear chromosome"/>
    <property type="evidence" value="ECO:0000318"/>
    <property type="project" value="GO_Central"/>
</dbReference>
<dbReference type="GO" id="GO:0005829">
    <property type="term" value="C:cytosol"/>
    <property type="evidence" value="ECO:0007005"/>
    <property type="project" value="PomBase"/>
</dbReference>
<dbReference type="GO" id="GO:0120231">
    <property type="term" value="C:DNA recombinase auxiliary factor complex"/>
    <property type="evidence" value="ECO:0000353"/>
    <property type="project" value="PomBase"/>
</dbReference>
<dbReference type="GO" id="GO:0005634">
    <property type="term" value="C:nucleus"/>
    <property type="evidence" value="ECO:0000314"/>
    <property type="project" value="PomBase"/>
</dbReference>
<dbReference type="GO" id="GO:0003690">
    <property type="term" value="F:double-stranded DNA binding"/>
    <property type="evidence" value="ECO:0000318"/>
    <property type="project" value="GO_Central"/>
</dbReference>
<dbReference type="GO" id="GO:0120230">
    <property type="term" value="F:recombinase activator activity"/>
    <property type="evidence" value="ECO:0000314"/>
    <property type="project" value="PomBase"/>
</dbReference>
<dbReference type="GO" id="GO:0007129">
    <property type="term" value="P:homologous chromosome pairing at meiosis"/>
    <property type="evidence" value="ECO:0000315"/>
    <property type="project" value="PomBase"/>
</dbReference>
<dbReference type="GO" id="GO:0000709">
    <property type="term" value="P:meiotic joint molecule formation"/>
    <property type="evidence" value="ECO:0000314"/>
    <property type="project" value="PomBase"/>
</dbReference>
<dbReference type="GO" id="GO:0010774">
    <property type="term" value="P:meiotic strand invasion involved in reciprocal meiotic recombination"/>
    <property type="evidence" value="ECO:0000314"/>
    <property type="project" value="PomBase"/>
</dbReference>
<dbReference type="Gene3D" id="1.10.10.10">
    <property type="entry name" value="Winged helix-like DNA-binding domain superfamily/Winged helix DNA-binding domain"/>
    <property type="match status" value="1"/>
</dbReference>
<dbReference type="InterPro" id="IPR010776">
    <property type="entry name" value="Hop2_WH_dom"/>
</dbReference>
<dbReference type="InterPro" id="IPR036388">
    <property type="entry name" value="WH-like_DNA-bd_sf"/>
</dbReference>
<dbReference type="PANTHER" id="PTHR15938:SF0">
    <property type="entry name" value="HOMOLOGOUS-PAIRING PROTEIN 2 HOMOLOG"/>
    <property type="match status" value="1"/>
</dbReference>
<dbReference type="PANTHER" id="PTHR15938">
    <property type="entry name" value="TBP-1 INTERACTING PROTEIN"/>
    <property type="match status" value="1"/>
</dbReference>
<dbReference type="Pfam" id="PF07106">
    <property type="entry name" value="TBPIP"/>
    <property type="match status" value="1"/>
</dbReference>
<keyword id="KW-0233">DNA recombination</keyword>
<keyword id="KW-0469">Meiosis</keyword>
<keyword id="KW-0539">Nucleus</keyword>
<keyword id="KW-1185">Reference proteome</keyword>
<accession>Q9HGK2</accession>
<proteinExistence type="evidence at protein level"/>
<protein>
    <recommendedName>
        <fullName>Homologous-pairing protein 2</fullName>
    </recommendedName>
    <alternativeName>
        <fullName>Meiotic expression up-regulated protein 13</fullName>
    </alternativeName>
</protein>
<gene>
    <name type="primary">meu13</name>
    <name type="synonym">hop2</name>
    <name type="ORF">SPAC222.15</name>
    <name type="ORF">SPAC821.01</name>
</gene>
<feature type="chain" id="PRO_0000096447" description="Homologous-pairing protein 2">
    <location>
        <begin position="1"/>
        <end position="216"/>
    </location>
</feature>
<comment type="function">
    <text evidence="1">Required for proper homologous pairing and efficient cross-over and intragenic recombination during meiosis. Acts indirectly in a process facilitating homologous recombination. Acts during mid- to late-horse-tail period.</text>
</comment>
<comment type="subunit">
    <text evidence="2">Interacts with mcp7.</text>
</comment>
<comment type="subcellular location">
    <subcellularLocation>
        <location evidence="1">Nucleus</location>
    </subcellularLocation>
</comment>
<comment type="similarity">
    <text evidence="3">Belongs to the HOP2 family.</text>
</comment>